<dbReference type="EMBL" id="AF224263">
    <property type="protein sequence ID" value="AAF44635.1"/>
    <property type="molecule type" value="Genomic_DNA"/>
</dbReference>
<dbReference type="SMR" id="Q9IA15"/>
<dbReference type="GO" id="GO:0005654">
    <property type="term" value="C:nucleoplasm"/>
    <property type="evidence" value="ECO:0007669"/>
    <property type="project" value="UniProtKB-ARBA"/>
</dbReference>
<dbReference type="GO" id="GO:0000981">
    <property type="term" value="F:DNA-binding transcription factor activity, RNA polymerase II-specific"/>
    <property type="evidence" value="ECO:0007669"/>
    <property type="project" value="InterPro"/>
</dbReference>
<dbReference type="GO" id="GO:0000978">
    <property type="term" value="F:RNA polymerase II cis-regulatory region sequence-specific DNA binding"/>
    <property type="evidence" value="ECO:0007669"/>
    <property type="project" value="TreeGrafter"/>
</dbReference>
<dbReference type="CDD" id="cd00086">
    <property type="entry name" value="homeodomain"/>
    <property type="match status" value="1"/>
</dbReference>
<dbReference type="FunFam" id="1.10.10.60:FF:000166">
    <property type="entry name" value="homeobox protein Hox-C11"/>
    <property type="match status" value="1"/>
</dbReference>
<dbReference type="Gene3D" id="1.10.10.60">
    <property type="entry name" value="Homeodomain-like"/>
    <property type="match status" value="1"/>
</dbReference>
<dbReference type="InterPro" id="IPR021918">
    <property type="entry name" value="DUF3528"/>
</dbReference>
<dbReference type="InterPro" id="IPR001356">
    <property type="entry name" value="HD"/>
</dbReference>
<dbReference type="InterPro" id="IPR020479">
    <property type="entry name" value="HD_metazoa"/>
</dbReference>
<dbReference type="InterPro" id="IPR017970">
    <property type="entry name" value="Homeobox_CS"/>
</dbReference>
<dbReference type="InterPro" id="IPR009057">
    <property type="entry name" value="Homeodomain-like_sf"/>
</dbReference>
<dbReference type="PANTHER" id="PTHR46092">
    <property type="entry name" value="HOMEOBOX PROTEIN HOX-A11-RELATED"/>
    <property type="match status" value="1"/>
</dbReference>
<dbReference type="PANTHER" id="PTHR46092:SF2">
    <property type="entry name" value="HOMEOBOX PROTEIN HOX-D11"/>
    <property type="match status" value="1"/>
</dbReference>
<dbReference type="Pfam" id="PF12045">
    <property type="entry name" value="DUF3528"/>
    <property type="match status" value="1"/>
</dbReference>
<dbReference type="Pfam" id="PF00046">
    <property type="entry name" value="Homeodomain"/>
    <property type="match status" value="1"/>
</dbReference>
<dbReference type="PRINTS" id="PR00024">
    <property type="entry name" value="HOMEOBOX"/>
</dbReference>
<dbReference type="SMART" id="SM00389">
    <property type="entry name" value="HOX"/>
    <property type="match status" value="1"/>
</dbReference>
<dbReference type="SUPFAM" id="SSF46689">
    <property type="entry name" value="Homeodomain-like"/>
    <property type="match status" value="1"/>
</dbReference>
<dbReference type="PROSITE" id="PS00027">
    <property type="entry name" value="HOMEOBOX_1"/>
    <property type="match status" value="1"/>
</dbReference>
<dbReference type="PROSITE" id="PS50071">
    <property type="entry name" value="HOMEOBOX_2"/>
    <property type="match status" value="1"/>
</dbReference>
<protein>
    <recommendedName>
        <fullName>Homeobox protein Hox-D11</fullName>
    </recommendedName>
</protein>
<keyword id="KW-0217">Developmental protein</keyword>
<keyword id="KW-0238">DNA-binding</keyword>
<keyword id="KW-0371">Homeobox</keyword>
<keyword id="KW-0539">Nucleus</keyword>
<keyword id="KW-0804">Transcription</keyword>
<keyword id="KW-0805">Transcription regulation</keyword>
<sequence>MYLPSCTYYVSAPDFSSVSTFLPPTTSCQMTFPYSSNLAQVQPVRELSFRDYGLEHPTKWHYRSNYAPYCSAEEIMHRDYIQPPTRTGMLFKNDTVYSQRGSSNPSCNFYTTVGRNGILPQGFDQFFETAYGISDSSNYEQLTEKSVSTCQSITASEKVSSGQEKESATEKSTVESSGTSATEKNSLSTALRCRKKRCPYTKYQIRELEREFFFNVYINKEKRLQLSRMLNLTDRQVKIWFQNRRMKEKKLSRDRLHFFTGNPLL</sequence>
<evidence type="ECO:0000250" key="1"/>
<evidence type="ECO:0000255" key="2">
    <source>
        <dbReference type="PROSITE-ProRule" id="PRU00108"/>
    </source>
</evidence>
<evidence type="ECO:0000256" key="3">
    <source>
        <dbReference type="SAM" id="MobiDB-lite"/>
    </source>
</evidence>
<evidence type="ECO:0000305" key="4"/>
<organism>
    <name type="scientific">Heterodontus francisci</name>
    <name type="common">Horn shark</name>
    <name type="synonym">Cestracion francisci</name>
    <dbReference type="NCBI Taxonomy" id="7792"/>
    <lineage>
        <taxon>Eukaryota</taxon>
        <taxon>Metazoa</taxon>
        <taxon>Chordata</taxon>
        <taxon>Craniata</taxon>
        <taxon>Vertebrata</taxon>
        <taxon>Chondrichthyes</taxon>
        <taxon>Elasmobranchii</taxon>
        <taxon>Galeomorphii</taxon>
        <taxon>Heterodontoidea</taxon>
        <taxon>Heterodontiformes</taxon>
        <taxon>Heterodontidae</taxon>
        <taxon>Heterodontus</taxon>
    </lineage>
</organism>
<feature type="chain" id="PRO_0000200235" description="Homeobox protein Hox-D11">
    <location>
        <begin position="1"/>
        <end position="265"/>
    </location>
</feature>
<feature type="DNA-binding region" description="Homeobox" evidence="2">
    <location>
        <begin position="193"/>
        <end position="252"/>
    </location>
</feature>
<feature type="region of interest" description="Disordered" evidence="3">
    <location>
        <begin position="158"/>
        <end position="181"/>
    </location>
</feature>
<feature type="compositionally biased region" description="Basic and acidic residues" evidence="3">
    <location>
        <begin position="163"/>
        <end position="173"/>
    </location>
</feature>
<name>HXD11_HETFR</name>
<proteinExistence type="inferred from homology"/>
<gene>
    <name type="primary">HOXD11</name>
</gene>
<comment type="function">
    <text evidence="1">Sequence-specific transcription factor which is part of a developmental regulatory system that provides cells with specific positional identities on the anterior-posterior axis.</text>
</comment>
<comment type="subcellular location">
    <subcellularLocation>
        <location evidence="2">Nucleus</location>
    </subcellularLocation>
</comment>
<comment type="similarity">
    <text evidence="4">Belongs to the Abd-B homeobox family.</text>
</comment>
<accession>Q9IA15</accession>
<reference key="1">
    <citation type="journal article" date="2000" name="Proc. Natl. Acad. Sci. U.S.A.">
        <title>Hox cluster genomics in the horn shark, Heterodontus francisci.</title>
        <authorList>
            <person name="Kim C.B."/>
            <person name="Amemiya C."/>
            <person name="Bailey W."/>
            <person name="Kawasaki K."/>
            <person name="Mezey J."/>
            <person name="Miller W."/>
            <person name="Minoshima S."/>
            <person name="Shimizu N."/>
            <person name="Wagner G."/>
            <person name="Ruddle F."/>
        </authorList>
    </citation>
    <scope>NUCLEOTIDE SEQUENCE [GENOMIC DNA]</scope>
</reference>